<organism>
    <name type="scientific">Bacillus thuringiensis subsp. konkukian (strain 97-27)</name>
    <dbReference type="NCBI Taxonomy" id="281309"/>
    <lineage>
        <taxon>Bacteria</taxon>
        <taxon>Bacillati</taxon>
        <taxon>Bacillota</taxon>
        <taxon>Bacilli</taxon>
        <taxon>Bacillales</taxon>
        <taxon>Bacillaceae</taxon>
        <taxon>Bacillus</taxon>
        <taxon>Bacillus cereus group</taxon>
    </lineage>
</organism>
<proteinExistence type="inferred from homology"/>
<protein>
    <recommendedName>
        <fullName>UPF0457 protein BT9727_3043</fullName>
    </recommendedName>
</protein>
<name>Y3043_BACHK</name>
<accession>Q6HGG0</accession>
<gene>
    <name type="ordered locus">BT9727_3043</name>
</gene>
<comment type="similarity">
    <text evidence="1">Belongs to the UPF0457 family.</text>
</comment>
<sequence length="84" mass="9592">MLGIHVKKTKEELIISWQFSKIHIPLCEITEVIEDNTYAGVEEKSAIRIGTAYGTTDRILIKTVKQNYLLFTTNRVSILNKIKA</sequence>
<feature type="chain" id="PRO_0000294494" description="UPF0457 protein BT9727_3043">
    <location>
        <begin position="1"/>
        <end position="84"/>
    </location>
</feature>
<reference key="1">
    <citation type="journal article" date="2006" name="J. Bacteriol.">
        <title>Pathogenomic sequence analysis of Bacillus cereus and Bacillus thuringiensis isolates closely related to Bacillus anthracis.</title>
        <authorList>
            <person name="Han C.S."/>
            <person name="Xie G."/>
            <person name="Challacombe J.F."/>
            <person name="Altherr M.R."/>
            <person name="Bhotika S.S."/>
            <person name="Bruce D."/>
            <person name="Campbell C.S."/>
            <person name="Campbell M.L."/>
            <person name="Chen J."/>
            <person name="Chertkov O."/>
            <person name="Cleland C."/>
            <person name="Dimitrijevic M."/>
            <person name="Doggett N.A."/>
            <person name="Fawcett J.J."/>
            <person name="Glavina T."/>
            <person name="Goodwin L.A."/>
            <person name="Hill K.K."/>
            <person name="Hitchcock P."/>
            <person name="Jackson P.J."/>
            <person name="Keim P."/>
            <person name="Kewalramani A.R."/>
            <person name="Longmire J."/>
            <person name="Lucas S."/>
            <person name="Malfatti S."/>
            <person name="McMurry K."/>
            <person name="Meincke L.J."/>
            <person name="Misra M."/>
            <person name="Moseman B.L."/>
            <person name="Mundt M."/>
            <person name="Munk A.C."/>
            <person name="Okinaka R.T."/>
            <person name="Parson-Quintana B."/>
            <person name="Reilly L.P."/>
            <person name="Richardson P."/>
            <person name="Robinson D.L."/>
            <person name="Rubin E."/>
            <person name="Saunders E."/>
            <person name="Tapia R."/>
            <person name="Tesmer J.G."/>
            <person name="Thayer N."/>
            <person name="Thompson L.S."/>
            <person name="Tice H."/>
            <person name="Ticknor L.O."/>
            <person name="Wills P.L."/>
            <person name="Brettin T.S."/>
            <person name="Gilna P."/>
        </authorList>
    </citation>
    <scope>NUCLEOTIDE SEQUENCE [LARGE SCALE GENOMIC DNA]</scope>
    <source>
        <strain>97-27</strain>
    </source>
</reference>
<evidence type="ECO:0000305" key="1"/>
<dbReference type="EMBL" id="AE017355">
    <property type="protein sequence ID" value="AAT60317.1"/>
    <property type="molecule type" value="Genomic_DNA"/>
</dbReference>
<dbReference type="RefSeq" id="WP_000900625.1">
    <property type="nucleotide sequence ID" value="NC_005957.1"/>
</dbReference>
<dbReference type="RefSeq" id="YP_037366.1">
    <property type="nucleotide sequence ID" value="NC_005957.1"/>
</dbReference>
<dbReference type="KEGG" id="btk:BT9727_3043"/>
<dbReference type="PATRIC" id="fig|281309.8.peg.3240"/>
<dbReference type="HOGENOM" id="CLU_174851_1_0_9"/>
<dbReference type="Proteomes" id="UP000001301">
    <property type="component" value="Chromosome"/>
</dbReference>
<dbReference type="InterPro" id="IPR055365">
    <property type="entry name" value="PH_SunI-like"/>
</dbReference>
<dbReference type="Pfam" id="PF23491">
    <property type="entry name" value="bPH_8"/>
    <property type="match status" value="1"/>
</dbReference>